<organism>
    <name type="scientific">Cereibacter sphaeroides (strain ATCC 17029 / ATH 2.4.9)</name>
    <name type="common">Rhodobacter sphaeroides</name>
    <dbReference type="NCBI Taxonomy" id="349101"/>
    <lineage>
        <taxon>Bacteria</taxon>
        <taxon>Pseudomonadati</taxon>
        <taxon>Pseudomonadota</taxon>
        <taxon>Alphaproteobacteria</taxon>
        <taxon>Rhodobacterales</taxon>
        <taxon>Paracoccaceae</taxon>
        <taxon>Cereibacter</taxon>
    </lineage>
</organism>
<feature type="chain" id="PRO_0000314209" description="UPF0262 protein Rsph17029_2283">
    <location>
        <begin position="1"/>
        <end position="158"/>
    </location>
</feature>
<comment type="similarity">
    <text evidence="1">Belongs to the UPF0262 family.</text>
</comment>
<proteinExistence type="inferred from homology"/>
<reference key="1">
    <citation type="submission" date="2007-02" db="EMBL/GenBank/DDBJ databases">
        <title>Complete sequence of chromosome 1 of Rhodobacter sphaeroides ATCC 17029.</title>
        <authorList>
            <person name="Copeland A."/>
            <person name="Lucas S."/>
            <person name="Lapidus A."/>
            <person name="Barry K."/>
            <person name="Detter J.C."/>
            <person name="Glavina del Rio T."/>
            <person name="Hammon N."/>
            <person name="Israni S."/>
            <person name="Dalin E."/>
            <person name="Tice H."/>
            <person name="Pitluck S."/>
            <person name="Kiss H."/>
            <person name="Brettin T."/>
            <person name="Bruce D."/>
            <person name="Han C."/>
            <person name="Tapia R."/>
            <person name="Gilna P."/>
            <person name="Schmutz J."/>
            <person name="Larimer F."/>
            <person name="Land M."/>
            <person name="Hauser L."/>
            <person name="Kyrpides N."/>
            <person name="Mikhailova N."/>
            <person name="Richardson P."/>
            <person name="Mackenzie C."/>
            <person name="Choudhary M."/>
            <person name="Donohue T.J."/>
            <person name="Kaplan S."/>
        </authorList>
    </citation>
    <scope>NUCLEOTIDE SEQUENCE [LARGE SCALE GENOMIC DNA]</scope>
    <source>
        <strain>ATCC 17029 / ATH 2.4.9</strain>
    </source>
</reference>
<dbReference type="EMBL" id="CP000577">
    <property type="protein sequence ID" value="ABN77385.1"/>
    <property type="molecule type" value="Genomic_DNA"/>
</dbReference>
<dbReference type="RefSeq" id="WP_002720797.1">
    <property type="nucleotide sequence ID" value="NC_009049.1"/>
</dbReference>
<dbReference type="KEGG" id="rsh:Rsph17029_2283"/>
<dbReference type="HOGENOM" id="CLU_112904_0_0_5"/>
<dbReference type="HAMAP" id="MF_00678">
    <property type="entry name" value="UPF0262"/>
    <property type="match status" value="1"/>
</dbReference>
<dbReference type="InterPro" id="IPR008321">
    <property type="entry name" value="UCP032146"/>
</dbReference>
<dbReference type="NCBIfam" id="NF002769">
    <property type="entry name" value="PRK02853.1"/>
    <property type="match status" value="1"/>
</dbReference>
<dbReference type="Pfam" id="PF06793">
    <property type="entry name" value="UPF0262"/>
    <property type="match status" value="1"/>
</dbReference>
<dbReference type="PIRSF" id="PIRSF032146">
    <property type="entry name" value="UCP032146"/>
    <property type="match status" value="1"/>
</dbReference>
<accession>A3PM19</accession>
<name>Y2283_CERS1</name>
<gene>
    <name type="ordered locus">Rsph17029_2283</name>
</gene>
<evidence type="ECO:0000255" key="1">
    <source>
        <dbReference type="HAMAP-Rule" id="MF_00678"/>
    </source>
</evidence>
<sequence>MNRICHIEIDQTSPIPPTAEIEQERQVAIFDLLEENSFALPVREGRAPAEGPFRLTLAIREGRLVFDIRSEEEEKVGEFHLSLGPFRQVVKDYFQICESYFEAVKRLPPSQIEAIDMARRGIHNEGARVLKERLEGKAEVDIDTARRLFTLICVLHWG</sequence>
<protein>
    <recommendedName>
        <fullName evidence="1">UPF0262 protein Rsph17029_2283</fullName>
    </recommendedName>
</protein>